<keyword id="KW-0687">Ribonucleoprotein</keyword>
<keyword id="KW-0689">Ribosomal protein</keyword>
<keyword id="KW-0694">RNA-binding</keyword>
<keyword id="KW-0699">rRNA-binding</keyword>
<organism>
    <name type="scientific">Bacillus cereus (strain AH187)</name>
    <dbReference type="NCBI Taxonomy" id="405534"/>
    <lineage>
        <taxon>Bacteria</taxon>
        <taxon>Bacillati</taxon>
        <taxon>Bacillota</taxon>
        <taxon>Bacilli</taxon>
        <taxon>Bacillales</taxon>
        <taxon>Bacillaceae</taxon>
        <taxon>Bacillus</taxon>
        <taxon>Bacillus cereus group</taxon>
    </lineage>
</organism>
<comment type="function">
    <text evidence="1">Binds to the 23S rRNA.</text>
</comment>
<comment type="similarity">
    <text evidence="1">Belongs to the bacterial ribosomal protein bL9 family.</text>
</comment>
<reference key="1">
    <citation type="submission" date="2008-10" db="EMBL/GenBank/DDBJ databases">
        <title>Genome sequence of Bacillus cereus AH187.</title>
        <authorList>
            <person name="Dodson R.J."/>
            <person name="Durkin A.S."/>
            <person name="Rosovitz M.J."/>
            <person name="Rasko D.A."/>
            <person name="Kolsto A.B."/>
            <person name="Okstad O.A."/>
            <person name="Ravel J."/>
            <person name="Sutton G."/>
        </authorList>
    </citation>
    <scope>NUCLEOTIDE SEQUENCE [LARGE SCALE GENOMIC DNA]</scope>
    <source>
        <strain>AH187</strain>
    </source>
</reference>
<evidence type="ECO:0000255" key="1">
    <source>
        <dbReference type="HAMAP-Rule" id="MF_00503"/>
    </source>
</evidence>
<evidence type="ECO:0000305" key="2"/>
<dbReference type="EMBL" id="CP001177">
    <property type="protein sequence ID" value="ACJ82366.1"/>
    <property type="molecule type" value="Genomic_DNA"/>
</dbReference>
<dbReference type="SMR" id="B7HZF6"/>
<dbReference type="KEGG" id="bcr:BCAH187_A5657"/>
<dbReference type="HOGENOM" id="CLU_078938_3_2_9"/>
<dbReference type="Proteomes" id="UP000002214">
    <property type="component" value="Chromosome"/>
</dbReference>
<dbReference type="GO" id="GO:1990904">
    <property type="term" value="C:ribonucleoprotein complex"/>
    <property type="evidence" value="ECO:0007669"/>
    <property type="project" value="UniProtKB-KW"/>
</dbReference>
<dbReference type="GO" id="GO:0005840">
    <property type="term" value="C:ribosome"/>
    <property type="evidence" value="ECO:0007669"/>
    <property type="project" value="UniProtKB-KW"/>
</dbReference>
<dbReference type="GO" id="GO:0019843">
    <property type="term" value="F:rRNA binding"/>
    <property type="evidence" value="ECO:0007669"/>
    <property type="project" value="UniProtKB-UniRule"/>
</dbReference>
<dbReference type="GO" id="GO:0003735">
    <property type="term" value="F:structural constituent of ribosome"/>
    <property type="evidence" value="ECO:0007669"/>
    <property type="project" value="InterPro"/>
</dbReference>
<dbReference type="GO" id="GO:0006412">
    <property type="term" value="P:translation"/>
    <property type="evidence" value="ECO:0007669"/>
    <property type="project" value="UniProtKB-UniRule"/>
</dbReference>
<dbReference type="FunFam" id="3.10.430.100:FF:000002">
    <property type="entry name" value="50S ribosomal protein L9"/>
    <property type="match status" value="1"/>
</dbReference>
<dbReference type="FunFam" id="3.40.5.10:FF:000002">
    <property type="entry name" value="50S ribosomal protein L9"/>
    <property type="match status" value="1"/>
</dbReference>
<dbReference type="Gene3D" id="3.10.430.100">
    <property type="entry name" value="Ribosomal protein L9, C-terminal domain"/>
    <property type="match status" value="1"/>
</dbReference>
<dbReference type="Gene3D" id="3.40.5.10">
    <property type="entry name" value="Ribosomal protein L9, N-terminal domain"/>
    <property type="match status" value="1"/>
</dbReference>
<dbReference type="HAMAP" id="MF_00503">
    <property type="entry name" value="Ribosomal_bL9"/>
    <property type="match status" value="1"/>
</dbReference>
<dbReference type="InterPro" id="IPR000244">
    <property type="entry name" value="Ribosomal_bL9"/>
</dbReference>
<dbReference type="InterPro" id="IPR009027">
    <property type="entry name" value="Ribosomal_bL9/RNase_H1_N"/>
</dbReference>
<dbReference type="InterPro" id="IPR020594">
    <property type="entry name" value="Ribosomal_bL9_bac/chp"/>
</dbReference>
<dbReference type="InterPro" id="IPR020069">
    <property type="entry name" value="Ribosomal_bL9_C"/>
</dbReference>
<dbReference type="InterPro" id="IPR036791">
    <property type="entry name" value="Ribosomal_bL9_C_sf"/>
</dbReference>
<dbReference type="InterPro" id="IPR020070">
    <property type="entry name" value="Ribosomal_bL9_N"/>
</dbReference>
<dbReference type="InterPro" id="IPR036935">
    <property type="entry name" value="Ribosomal_bL9_N_sf"/>
</dbReference>
<dbReference type="NCBIfam" id="TIGR00158">
    <property type="entry name" value="L9"/>
    <property type="match status" value="1"/>
</dbReference>
<dbReference type="PANTHER" id="PTHR21368">
    <property type="entry name" value="50S RIBOSOMAL PROTEIN L9"/>
    <property type="match status" value="1"/>
</dbReference>
<dbReference type="Pfam" id="PF03948">
    <property type="entry name" value="Ribosomal_L9_C"/>
    <property type="match status" value="1"/>
</dbReference>
<dbReference type="Pfam" id="PF01281">
    <property type="entry name" value="Ribosomal_L9_N"/>
    <property type="match status" value="1"/>
</dbReference>
<dbReference type="SUPFAM" id="SSF55658">
    <property type="entry name" value="L9 N-domain-like"/>
    <property type="match status" value="1"/>
</dbReference>
<dbReference type="SUPFAM" id="SSF55653">
    <property type="entry name" value="Ribosomal protein L9 C-domain"/>
    <property type="match status" value="1"/>
</dbReference>
<dbReference type="PROSITE" id="PS00651">
    <property type="entry name" value="RIBOSOMAL_L9"/>
    <property type="match status" value="1"/>
</dbReference>
<sequence>MKVIFLKDVKGKGKKGEVKNVPDGYANNFLLKQGLAAEATNSSMKTLEAQKRKEEKDAAAELENAKQLKETLEKLTVELKAKSGEGGRLFGSITSKQIVDAMQKSHNIKLDKRKFEMDDAIRALGYTNVTVKLHPQVTATVKVHVSEQ</sequence>
<gene>
    <name evidence="1" type="primary">rplI</name>
    <name type="ordered locus">BCAH187_A5657</name>
</gene>
<proteinExistence type="inferred from homology"/>
<name>RL9_BACC7</name>
<feature type="chain" id="PRO_1000126867" description="Large ribosomal subunit protein bL9">
    <location>
        <begin position="1"/>
        <end position="148"/>
    </location>
</feature>
<accession>B7HZF6</accession>
<protein>
    <recommendedName>
        <fullName evidence="1">Large ribosomal subunit protein bL9</fullName>
    </recommendedName>
    <alternativeName>
        <fullName evidence="2">50S ribosomal protein L9</fullName>
    </alternativeName>
</protein>